<comment type="developmental stage">
    <text evidence="1">Expressed in 7 day- and 14 day old seedlings.</text>
</comment>
<comment type="similarity">
    <text evidence="2">Belongs to the cyclin family.</text>
</comment>
<sequence length="234" mass="27300">MSTEIGHLRRRLVEFLIQSTTLLELPPIVKYSALSLFFDRFRPNLVRFLQKKKAEHWLLQPLNESNLQLFVLISIWISCKMHCTRGLSVHSLKSFGDKVITEQLFMVRDFLDAELVFLKVLKFEIGTLNIAYTRLEDLLIQFKEVAKVGEQLNFEACMDMMDLLYEKEDTSLLYQSSKSLAASILVSSYIITVPKQQYEFPILPWVKMVTNKEEREVVELVEYILAHVLYSNSP</sequence>
<gene>
    <name type="primary">CYCJ18</name>
    <name type="ordered locus">At2g01905</name>
    <name type="ORF">T23K3</name>
</gene>
<name>CCJ18_ARATH</name>
<reference key="1">
    <citation type="journal article" date="2001" name="Biochim. Biophys. Acta">
        <title>A novel and highly divergent Arabidopsis cyclin isolated by complementation in budding yeast.</title>
        <authorList>
            <person name="Abrahams S."/>
            <person name="Cavet G."/>
            <person name="Oakenfull E.A."/>
            <person name="Carmichael J.P."/>
            <person name="Shah Z.H."/>
            <person name="Soni R."/>
            <person name="Murray J.A.H."/>
        </authorList>
    </citation>
    <scope>NUCLEOTIDE SEQUENCE [MRNA]</scope>
    <scope>DEVELOPMENTAL STAGE</scope>
</reference>
<reference key="2">
    <citation type="journal article" date="1999" name="Nature">
        <title>Sequence and analysis of chromosome 2 of the plant Arabidopsis thaliana.</title>
        <authorList>
            <person name="Lin X."/>
            <person name="Kaul S."/>
            <person name="Rounsley S.D."/>
            <person name="Shea T.P."/>
            <person name="Benito M.-I."/>
            <person name="Town C.D."/>
            <person name="Fujii C.Y."/>
            <person name="Mason T.M."/>
            <person name="Bowman C.L."/>
            <person name="Barnstead M.E."/>
            <person name="Feldblyum T.V."/>
            <person name="Buell C.R."/>
            <person name="Ketchum K.A."/>
            <person name="Lee J.J."/>
            <person name="Ronning C.M."/>
            <person name="Koo H.L."/>
            <person name="Moffat K.S."/>
            <person name="Cronin L.A."/>
            <person name="Shen M."/>
            <person name="Pai G."/>
            <person name="Van Aken S."/>
            <person name="Umayam L."/>
            <person name="Tallon L.J."/>
            <person name="Gill J.E."/>
            <person name="Adams M.D."/>
            <person name="Carrera A.J."/>
            <person name="Creasy T.H."/>
            <person name="Goodman H.M."/>
            <person name="Somerville C.R."/>
            <person name="Copenhaver G.P."/>
            <person name="Preuss D."/>
            <person name="Nierman W.C."/>
            <person name="White O."/>
            <person name="Eisen J.A."/>
            <person name="Salzberg S.L."/>
            <person name="Fraser C.M."/>
            <person name="Venter J.C."/>
        </authorList>
    </citation>
    <scope>NUCLEOTIDE SEQUENCE [LARGE SCALE GENOMIC DNA]</scope>
    <source>
        <strain>cv. Columbia</strain>
    </source>
</reference>
<reference key="3">
    <citation type="journal article" date="2017" name="Plant J.">
        <title>Araport11: a complete reannotation of the Arabidopsis thaliana reference genome.</title>
        <authorList>
            <person name="Cheng C.Y."/>
            <person name="Krishnakumar V."/>
            <person name="Chan A.P."/>
            <person name="Thibaud-Nissen F."/>
            <person name="Schobel S."/>
            <person name="Town C.D."/>
        </authorList>
    </citation>
    <scope>GENOME REANNOTATION</scope>
    <source>
        <strain>cv. Columbia</strain>
    </source>
</reference>
<protein>
    <recommendedName>
        <fullName>Cyclin-J18</fullName>
    </recommendedName>
</protein>
<organism>
    <name type="scientific">Arabidopsis thaliana</name>
    <name type="common">Mouse-ear cress</name>
    <dbReference type="NCBI Taxonomy" id="3702"/>
    <lineage>
        <taxon>Eukaryota</taxon>
        <taxon>Viridiplantae</taxon>
        <taxon>Streptophyta</taxon>
        <taxon>Embryophyta</taxon>
        <taxon>Tracheophyta</taxon>
        <taxon>Spermatophyta</taxon>
        <taxon>Magnoliopsida</taxon>
        <taxon>eudicotyledons</taxon>
        <taxon>Gunneridae</taxon>
        <taxon>Pentapetalae</taxon>
        <taxon>rosids</taxon>
        <taxon>malvids</taxon>
        <taxon>Brassicales</taxon>
        <taxon>Brassicaceae</taxon>
        <taxon>Camelineae</taxon>
        <taxon>Arabidopsis</taxon>
    </lineage>
</organism>
<dbReference type="EMBL" id="AF331758">
    <property type="protein sequence ID" value="AAK01135.1"/>
    <property type="molecule type" value="mRNA"/>
</dbReference>
<dbReference type="EMBL" id="AC007069">
    <property type="status" value="NOT_ANNOTATED_CDS"/>
    <property type="molecule type" value="Genomic_DNA"/>
</dbReference>
<dbReference type="EMBL" id="CP002685">
    <property type="protein sequence ID" value="AEC05515.1"/>
    <property type="molecule type" value="Genomic_DNA"/>
</dbReference>
<dbReference type="RefSeq" id="NP_001030944.1">
    <property type="nucleotide sequence ID" value="NM_001035867.3"/>
</dbReference>
<dbReference type="SMR" id="Q9C5X2"/>
<dbReference type="FunCoup" id="Q9C5X2">
    <property type="interactions" value="409"/>
</dbReference>
<dbReference type="STRING" id="3702.Q9C5X2"/>
<dbReference type="PaxDb" id="3702-AT2G01905.1"/>
<dbReference type="EnsemblPlants" id="AT2G01905.1">
    <property type="protein sequence ID" value="AT2G01905.1"/>
    <property type="gene ID" value="AT2G01905"/>
</dbReference>
<dbReference type="GeneID" id="3768365"/>
<dbReference type="Gramene" id="AT2G01905.1">
    <property type="protein sequence ID" value="AT2G01905.1"/>
    <property type="gene ID" value="AT2G01905"/>
</dbReference>
<dbReference type="KEGG" id="ath:AT2G01905"/>
<dbReference type="Araport" id="AT2G01905"/>
<dbReference type="TAIR" id="AT2G01905">
    <property type="gene designation" value="CYCJ18"/>
</dbReference>
<dbReference type="eggNOG" id="ENOG502QPM6">
    <property type="taxonomic scope" value="Eukaryota"/>
</dbReference>
<dbReference type="HOGENOM" id="CLU_091501_0_0_1"/>
<dbReference type="InParanoid" id="Q9C5X2"/>
<dbReference type="OMA" id="EFPVLAW"/>
<dbReference type="PhylomeDB" id="Q9C5X2"/>
<dbReference type="PRO" id="PR:Q9C5X2"/>
<dbReference type="Proteomes" id="UP000006548">
    <property type="component" value="Chromosome 2"/>
</dbReference>
<dbReference type="ExpressionAtlas" id="Q9C5X2">
    <property type="expression patterns" value="baseline and differential"/>
</dbReference>
<dbReference type="GO" id="GO:0051301">
    <property type="term" value="P:cell division"/>
    <property type="evidence" value="ECO:0007669"/>
    <property type="project" value="UniProtKB-KW"/>
</dbReference>
<dbReference type="GO" id="GO:0051726">
    <property type="term" value="P:regulation of cell cycle"/>
    <property type="evidence" value="ECO:0000304"/>
    <property type="project" value="TAIR"/>
</dbReference>
<dbReference type="FunFam" id="1.10.472.10:FF:000109">
    <property type="entry name" value="Cyclin-J18-like"/>
    <property type="match status" value="1"/>
</dbReference>
<dbReference type="Gene3D" id="1.10.472.10">
    <property type="entry name" value="Cyclin-like"/>
    <property type="match status" value="1"/>
</dbReference>
<dbReference type="InterPro" id="IPR036915">
    <property type="entry name" value="Cyclin-like_sf"/>
</dbReference>
<dbReference type="InterPro" id="IPR006671">
    <property type="entry name" value="Cyclin_N"/>
</dbReference>
<dbReference type="Pfam" id="PF00134">
    <property type="entry name" value="Cyclin_N"/>
    <property type="match status" value="1"/>
</dbReference>
<dbReference type="SUPFAM" id="SSF47954">
    <property type="entry name" value="Cyclin-like"/>
    <property type="match status" value="1"/>
</dbReference>
<feature type="chain" id="PRO_0000287387" description="Cyclin-J18">
    <location>
        <begin position="1"/>
        <end position="234"/>
    </location>
</feature>
<feature type="sequence conflict" description="In Ref. 1; AAK01135." evidence="2" ref="1">
    <original>T</original>
    <variation>A</variation>
    <location>
        <position position="20"/>
    </location>
</feature>
<feature type="sequence conflict" description="In Ref. 1; AAK01135." evidence="2" ref="1">
    <original>R</original>
    <variation>L</variation>
    <location>
        <position position="134"/>
    </location>
</feature>
<feature type="sequence conflict" description="In Ref. 1; AAK01135." evidence="2" ref="1">
    <original>LI</original>
    <variation>FT</variation>
    <location>
        <begin position="139"/>
        <end position="140"/>
    </location>
</feature>
<evidence type="ECO:0000269" key="1">
    <source>
    </source>
</evidence>
<evidence type="ECO:0000305" key="2"/>
<keyword id="KW-0131">Cell cycle</keyword>
<keyword id="KW-0132">Cell division</keyword>
<keyword id="KW-0195">Cyclin</keyword>
<keyword id="KW-1185">Reference proteome</keyword>
<proteinExistence type="evidence at transcript level"/>
<accession>Q9C5X2</accession>